<evidence type="ECO:0000255" key="1">
    <source>
        <dbReference type="HAMAP-Rule" id="MF_01367"/>
    </source>
</evidence>
<evidence type="ECO:0000305" key="2"/>
<gene>
    <name evidence="1" type="primary">rpl14</name>
</gene>
<comment type="function">
    <text evidence="1">Binds to 23S rRNA.</text>
</comment>
<comment type="subunit">
    <text evidence="1">Part of the 50S ribosomal subunit.</text>
</comment>
<comment type="subcellular location">
    <subcellularLocation>
        <location>Plastid</location>
        <location>Chloroplast</location>
    </subcellularLocation>
</comment>
<comment type="similarity">
    <text evidence="1">Belongs to the universal ribosomal protein uL14 family.</text>
</comment>
<proteinExistence type="inferred from homology"/>
<reference key="1">
    <citation type="submission" date="2007-03" db="EMBL/GenBank/DDBJ databases">
        <title>Sequencing analysis of Aethionema grandiflorum chloroplast DNA.</title>
        <authorList>
            <person name="Hosouchi T."/>
            <person name="Tsuruoka H."/>
            <person name="Kotani H."/>
        </authorList>
    </citation>
    <scope>NUCLEOTIDE SEQUENCE [LARGE SCALE GENOMIC DNA]</scope>
</reference>
<protein>
    <recommendedName>
        <fullName evidence="1">Large ribosomal subunit protein uL14c</fullName>
    </recommendedName>
    <alternativeName>
        <fullName evidence="2">50S ribosomal protein L14, chloroplastic</fullName>
    </alternativeName>
</protein>
<accession>A4QJN5</accession>
<dbReference type="EMBL" id="AP009367">
    <property type="protein sequence ID" value="BAF49890.1"/>
    <property type="molecule type" value="Genomic_DNA"/>
</dbReference>
<dbReference type="RefSeq" id="YP_001123066.1">
    <property type="nucleotide sequence ID" value="NC_009266.1"/>
</dbReference>
<dbReference type="SMR" id="A4QJN5"/>
<dbReference type="GeneID" id="4962250"/>
<dbReference type="GO" id="GO:0009507">
    <property type="term" value="C:chloroplast"/>
    <property type="evidence" value="ECO:0007669"/>
    <property type="project" value="UniProtKB-SubCell"/>
</dbReference>
<dbReference type="GO" id="GO:0022625">
    <property type="term" value="C:cytosolic large ribosomal subunit"/>
    <property type="evidence" value="ECO:0007669"/>
    <property type="project" value="TreeGrafter"/>
</dbReference>
<dbReference type="GO" id="GO:0070180">
    <property type="term" value="F:large ribosomal subunit rRNA binding"/>
    <property type="evidence" value="ECO:0007669"/>
    <property type="project" value="TreeGrafter"/>
</dbReference>
<dbReference type="GO" id="GO:0003735">
    <property type="term" value="F:structural constituent of ribosome"/>
    <property type="evidence" value="ECO:0007669"/>
    <property type="project" value="InterPro"/>
</dbReference>
<dbReference type="GO" id="GO:0006412">
    <property type="term" value="P:translation"/>
    <property type="evidence" value="ECO:0007669"/>
    <property type="project" value="UniProtKB-UniRule"/>
</dbReference>
<dbReference type="CDD" id="cd00337">
    <property type="entry name" value="Ribosomal_uL14"/>
    <property type="match status" value="1"/>
</dbReference>
<dbReference type="FunFam" id="2.40.150.20:FF:000002">
    <property type="entry name" value="50S ribosomal protein L14, chloroplastic"/>
    <property type="match status" value="1"/>
</dbReference>
<dbReference type="Gene3D" id="2.40.150.20">
    <property type="entry name" value="Ribosomal protein L14"/>
    <property type="match status" value="1"/>
</dbReference>
<dbReference type="HAMAP" id="MF_01367">
    <property type="entry name" value="Ribosomal_uL14"/>
    <property type="match status" value="1"/>
</dbReference>
<dbReference type="InterPro" id="IPR000218">
    <property type="entry name" value="Ribosomal_uL14"/>
</dbReference>
<dbReference type="InterPro" id="IPR005745">
    <property type="entry name" value="Ribosomal_uL14_bac-type"/>
</dbReference>
<dbReference type="InterPro" id="IPR019972">
    <property type="entry name" value="Ribosomal_uL14_CS"/>
</dbReference>
<dbReference type="InterPro" id="IPR036853">
    <property type="entry name" value="Ribosomal_uL14_sf"/>
</dbReference>
<dbReference type="NCBIfam" id="TIGR01067">
    <property type="entry name" value="rplN_bact"/>
    <property type="match status" value="1"/>
</dbReference>
<dbReference type="PANTHER" id="PTHR11761">
    <property type="entry name" value="50S/60S RIBOSOMAL PROTEIN L14/L23"/>
    <property type="match status" value="1"/>
</dbReference>
<dbReference type="PANTHER" id="PTHR11761:SF3">
    <property type="entry name" value="LARGE RIBOSOMAL SUBUNIT PROTEIN UL14M"/>
    <property type="match status" value="1"/>
</dbReference>
<dbReference type="Pfam" id="PF00238">
    <property type="entry name" value="Ribosomal_L14"/>
    <property type="match status" value="1"/>
</dbReference>
<dbReference type="SMART" id="SM01374">
    <property type="entry name" value="Ribosomal_L14"/>
    <property type="match status" value="1"/>
</dbReference>
<dbReference type="SUPFAM" id="SSF50193">
    <property type="entry name" value="Ribosomal protein L14"/>
    <property type="match status" value="1"/>
</dbReference>
<dbReference type="PROSITE" id="PS00049">
    <property type="entry name" value="RIBOSOMAL_L14"/>
    <property type="match status" value="1"/>
</dbReference>
<feature type="chain" id="PRO_0000355857" description="Large ribosomal subunit protein uL14c">
    <location>
        <begin position="1"/>
        <end position="122"/>
    </location>
</feature>
<geneLocation type="chloroplast"/>
<sequence length="122" mass="13582">MIQPQTYLNVADNSGARELMCIRIIGASNRRYAHIGDVIVAVIKEAIPNTPLERSEVIRAVIVRTCKELKRNNGTIIRYDDNAAVVIDQEGNPKGTRVFGAIPRELRQLNFTKIVSLAPEVL</sequence>
<name>RK14_AETGR</name>
<organism>
    <name type="scientific">Aethionema grandiflorum</name>
    <name type="common">Persian stone-cress</name>
    <dbReference type="NCBI Taxonomy" id="72657"/>
    <lineage>
        <taxon>Eukaryota</taxon>
        <taxon>Viridiplantae</taxon>
        <taxon>Streptophyta</taxon>
        <taxon>Embryophyta</taxon>
        <taxon>Tracheophyta</taxon>
        <taxon>Spermatophyta</taxon>
        <taxon>Magnoliopsida</taxon>
        <taxon>eudicotyledons</taxon>
        <taxon>Gunneridae</taxon>
        <taxon>Pentapetalae</taxon>
        <taxon>rosids</taxon>
        <taxon>malvids</taxon>
        <taxon>Brassicales</taxon>
        <taxon>Brassicaceae</taxon>
        <taxon>Aethionemeae</taxon>
        <taxon>Aethionema</taxon>
    </lineage>
</organism>
<keyword id="KW-0150">Chloroplast</keyword>
<keyword id="KW-0934">Plastid</keyword>
<keyword id="KW-0687">Ribonucleoprotein</keyword>
<keyword id="KW-0689">Ribosomal protein</keyword>
<keyword id="KW-0694">RNA-binding</keyword>
<keyword id="KW-0699">rRNA-binding</keyword>